<name>SYFA_STRMU</name>
<proteinExistence type="inferred from homology"/>
<protein>
    <recommendedName>
        <fullName evidence="1">Phenylalanine--tRNA ligase alpha subunit</fullName>
        <ecNumber evidence="1">6.1.1.20</ecNumber>
    </recommendedName>
    <alternativeName>
        <fullName evidence="1">Phenylalanyl-tRNA synthetase alpha subunit</fullName>
        <shortName evidence="1">PheRS</shortName>
    </alternativeName>
</protein>
<feature type="chain" id="PRO_0000126772" description="Phenylalanine--tRNA ligase alpha subunit">
    <location>
        <begin position="1"/>
        <end position="347"/>
    </location>
</feature>
<feature type="binding site" evidence="1">
    <location>
        <position position="261"/>
    </location>
    <ligand>
        <name>Mg(2+)</name>
        <dbReference type="ChEBI" id="CHEBI:18420"/>
        <note>shared with beta subunit</note>
    </ligand>
</feature>
<dbReference type="EC" id="6.1.1.20" evidence="1"/>
<dbReference type="EMBL" id="AE014133">
    <property type="protein sequence ID" value="AAN59163.1"/>
    <property type="molecule type" value="Genomic_DNA"/>
</dbReference>
<dbReference type="RefSeq" id="NP_721857.1">
    <property type="nucleotide sequence ID" value="NC_004350.2"/>
</dbReference>
<dbReference type="RefSeq" id="WP_002262925.1">
    <property type="nucleotide sequence ID" value="NC_004350.2"/>
</dbReference>
<dbReference type="SMR" id="Q8CWX1"/>
<dbReference type="STRING" id="210007.SMU_1512"/>
<dbReference type="KEGG" id="smu:SMU_1512"/>
<dbReference type="PATRIC" id="fig|210007.7.peg.1345"/>
<dbReference type="eggNOG" id="COG0016">
    <property type="taxonomic scope" value="Bacteria"/>
</dbReference>
<dbReference type="HOGENOM" id="CLU_025086_0_1_9"/>
<dbReference type="OrthoDB" id="9800719at2"/>
<dbReference type="PhylomeDB" id="Q8CWX1"/>
<dbReference type="Proteomes" id="UP000002512">
    <property type="component" value="Chromosome"/>
</dbReference>
<dbReference type="GO" id="GO:0005737">
    <property type="term" value="C:cytoplasm"/>
    <property type="evidence" value="ECO:0007669"/>
    <property type="project" value="UniProtKB-SubCell"/>
</dbReference>
<dbReference type="GO" id="GO:0005524">
    <property type="term" value="F:ATP binding"/>
    <property type="evidence" value="ECO:0007669"/>
    <property type="project" value="UniProtKB-UniRule"/>
</dbReference>
<dbReference type="GO" id="GO:0140096">
    <property type="term" value="F:catalytic activity, acting on a protein"/>
    <property type="evidence" value="ECO:0007669"/>
    <property type="project" value="UniProtKB-ARBA"/>
</dbReference>
<dbReference type="GO" id="GO:0000287">
    <property type="term" value="F:magnesium ion binding"/>
    <property type="evidence" value="ECO:0007669"/>
    <property type="project" value="UniProtKB-UniRule"/>
</dbReference>
<dbReference type="GO" id="GO:0004826">
    <property type="term" value="F:phenylalanine-tRNA ligase activity"/>
    <property type="evidence" value="ECO:0007669"/>
    <property type="project" value="UniProtKB-UniRule"/>
</dbReference>
<dbReference type="GO" id="GO:0016740">
    <property type="term" value="F:transferase activity"/>
    <property type="evidence" value="ECO:0007669"/>
    <property type="project" value="UniProtKB-ARBA"/>
</dbReference>
<dbReference type="GO" id="GO:0000049">
    <property type="term" value="F:tRNA binding"/>
    <property type="evidence" value="ECO:0007669"/>
    <property type="project" value="InterPro"/>
</dbReference>
<dbReference type="GO" id="GO:0006432">
    <property type="term" value="P:phenylalanyl-tRNA aminoacylation"/>
    <property type="evidence" value="ECO:0007669"/>
    <property type="project" value="UniProtKB-UniRule"/>
</dbReference>
<dbReference type="CDD" id="cd00496">
    <property type="entry name" value="PheRS_alpha_core"/>
    <property type="match status" value="1"/>
</dbReference>
<dbReference type="FunFam" id="3.30.930.10:FF:000003">
    <property type="entry name" value="Phenylalanine--tRNA ligase alpha subunit"/>
    <property type="match status" value="1"/>
</dbReference>
<dbReference type="Gene3D" id="3.30.930.10">
    <property type="entry name" value="Bira Bifunctional Protein, Domain 2"/>
    <property type="match status" value="1"/>
</dbReference>
<dbReference type="HAMAP" id="MF_00281">
    <property type="entry name" value="Phe_tRNA_synth_alpha1"/>
    <property type="match status" value="1"/>
</dbReference>
<dbReference type="InterPro" id="IPR006195">
    <property type="entry name" value="aa-tRNA-synth_II"/>
</dbReference>
<dbReference type="InterPro" id="IPR045864">
    <property type="entry name" value="aa-tRNA-synth_II/BPL/LPL"/>
</dbReference>
<dbReference type="InterPro" id="IPR004529">
    <property type="entry name" value="Phe-tRNA-synth_IIc_asu"/>
</dbReference>
<dbReference type="InterPro" id="IPR004188">
    <property type="entry name" value="Phe-tRNA_ligase_II_N"/>
</dbReference>
<dbReference type="InterPro" id="IPR022911">
    <property type="entry name" value="Phe_tRNA_ligase_alpha1_bac"/>
</dbReference>
<dbReference type="InterPro" id="IPR002319">
    <property type="entry name" value="Phenylalanyl-tRNA_Synthase"/>
</dbReference>
<dbReference type="InterPro" id="IPR010978">
    <property type="entry name" value="tRNA-bd_arm"/>
</dbReference>
<dbReference type="NCBIfam" id="TIGR00468">
    <property type="entry name" value="pheS"/>
    <property type="match status" value="1"/>
</dbReference>
<dbReference type="PANTHER" id="PTHR11538:SF41">
    <property type="entry name" value="PHENYLALANINE--TRNA LIGASE, MITOCHONDRIAL"/>
    <property type="match status" value="1"/>
</dbReference>
<dbReference type="PANTHER" id="PTHR11538">
    <property type="entry name" value="PHENYLALANYL-TRNA SYNTHETASE"/>
    <property type="match status" value="1"/>
</dbReference>
<dbReference type="Pfam" id="PF02912">
    <property type="entry name" value="Phe_tRNA-synt_N"/>
    <property type="match status" value="1"/>
</dbReference>
<dbReference type="Pfam" id="PF01409">
    <property type="entry name" value="tRNA-synt_2d"/>
    <property type="match status" value="1"/>
</dbReference>
<dbReference type="SUPFAM" id="SSF55681">
    <property type="entry name" value="Class II aaRS and biotin synthetases"/>
    <property type="match status" value="1"/>
</dbReference>
<dbReference type="SUPFAM" id="SSF46589">
    <property type="entry name" value="tRNA-binding arm"/>
    <property type="match status" value="1"/>
</dbReference>
<dbReference type="PROSITE" id="PS50862">
    <property type="entry name" value="AA_TRNA_LIGASE_II"/>
    <property type="match status" value="1"/>
</dbReference>
<organism>
    <name type="scientific">Streptococcus mutans serotype c (strain ATCC 700610 / UA159)</name>
    <dbReference type="NCBI Taxonomy" id="210007"/>
    <lineage>
        <taxon>Bacteria</taxon>
        <taxon>Bacillati</taxon>
        <taxon>Bacillota</taxon>
        <taxon>Bacilli</taxon>
        <taxon>Lactobacillales</taxon>
        <taxon>Streptococcaceae</taxon>
        <taxon>Streptococcus</taxon>
    </lineage>
</organism>
<reference key="1">
    <citation type="journal article" date="2002" name="Proc. Natl. Acad. Sci. U.S.A.">
        <title>Genome sequence of Streptococcus mutans UA159, a cariogenic dental pathogen.</title>
        <authorList>
            <person name="Ajdic D.J."/>
            <person name="McShan W.M."/>
            <person name="McLaughlin R.E."/>
            <person name="Savic G."/>
            <person name="Chang J."/>
            <person name="Carson M.B."/>
            <person name="Primeaux C."/>
            <person name="Tian R."/>
            <person name="Kenton S."/>
            <person name="Jia H.G."/>
            <person name="Lin S.P."/>
            <person name="Qian Y."/>
            <person name="Li S."/>
            <person name="Zhu H."/>
            <person name="Najar F.Z."/>
            <person name="Lai H."/>
            <person name="White J."/>
            <person name="Roe B.A."/>
            <person name="Ferretti J.J."/>
        </authorList>
    </citation>
    <scope>NUCLEOTIDE SEQUENCE [LARGE SCALE GENOMIC DNA]</scope>
    <source>
        <strain>ATCC 700610 / UA159</strain>
    </source>
</reference>
<keyword id="KW-0030">Aminoacyl-tRNA synthetase</keyword>
<keyword id="KW-0067">ATP-binding</keyword>
<keyword id="KW-0963">Cytoplasm</keyword>
<keyword id="KW-0436">Ligase</keyword>
<keyword id="KW-0460">Magnesium</keyword>
<keyword id="KW-0479">Metal-binding</keyword>
<keyword id="KW-0547">Nucleotide-binding</keyword>
<keyword id="KW-0648">Protein biosynthesis</keyword>
<keyword id="KW-1185">Reference proteome</keyword>
<evidence type="ECO:0000255" key="1">
    <source>
        <dbReference type="HAMAP-Rule" id="MF_00281"/>
    </source>
</evidence>
<sequence length="347" mass="39296">MDLQAQLEELRKSTQATLKEMSGNHSKELQDLRVKVLGKKGSLTELLKGLKDLPNELRPVVGKQVNEVRDVLTKAFEEQAKIVEAAKIQAQLESETLDVTLPGRQIHLGNRHVLSQISEEIEDIFLGMGFQVVDGYEVEQDYYNFERMNLPKDHPARDMQDTFYISEDILLRTHTSPVQARTLDKHDFSKGPLKMISPGRVFRRDTDDATHSHQFHQIEGLVVGKNISMGDLKGTLEMISKKMFGEDRKIRLRPSYFPFTEPSVEVDVSCFKCGGKGCNVCKKTGWIEILGAGMVHPSVLEMSGVNSEEYSGFAFGLGQERMAMLRYGINDIRGFYQGDSRFTEQFN</sequence>
<accession>Q8CWX1</accession>
<gene>
    <name evidence="1" type="primary">pheS</name>
    <name type="synonym">syfA</name>
    <name type="ordered locus">SMU_1512</name>
</gene>
<comment type="catalytic activity">
    <reaction evidence="1">
        <text>tRNA(Phe) + L-phenylalanine + ATP = L-phenylalanyl-tRNA(Phe) + AMP + diphosphate + H(+)</text>
        <dbReference type="Rhea" id="RHEA:19413"/>
        <dbReference type="Rhea" id="RHEA-COMP:9668"/>
        <dbReference type="Rhea" id="RHEA-COMP:9699"/>
        <dbReference type="ChEBI" id="CHEBI:15378"/>
        <dbReference type="ChEBI" id="CHEBI:30616"/>
        <dbReference type="ChEBI" id="CHEBI:33019"/>
        <dbReference type="ChEBI" id="CHEBI:58095"/>
        <dbReference type="ChEBI" id="CHEBI:78442"/>
        <dbReference type="ChEBI" id="CHEBI:78531"/>
        <dbReference type="ChEBI" id="CHEBI:456215"/>
        <dbReference type="EC" id="6.1.1.20"/>
    </reaction>
</comment>
<comment type="cofactor">
    <cofactor evidence="1">
        <name>Mg(2+)</name>
        <dbReference type="ChEBI" id="CHEBI:18420"/>
    </cofactor>
    <text evidence="1">Binds 2 magnesium ions per tetramer.</text>
</comment>
<comment type="subunit">
    <text evidence="1">Tetramer of two alpha and two beta subunits.</text>
</comment>
<comment type="subcellular location">
    <subcellularLocation>
        <location evidence="1">Cytoplasm</location>
    </subcellularLocation>
</comment>
<comment type="similarity">
    <text evidence="1">Belongs to the class-II aminoacyl-tRNA synthetase family. Phe-tRNA synthetase alpha subunit type 1 subfamily.</text>
</comment>